<comment type="function">
    <text evidence="1">Probable E3 ubiquitin-protein ligase that acts as a negative regulator of double-strand breaks (DSBs) repair following DNA damage.</text>
</comment>
<comment type="catalytic activity">
    <reaction>
        <text>S-ubiquitinyl-[E2 ubiquitin-conjugating enzyme]-L-cysteine + [acceptor protein]-L-lysine = [E2 ubiquitin-conjugating enzyme]-L-cysteine + N(6)-ubiquitinyl-[acceptor protein]-L-lysine.</text>
        <dbReference type="EC" id="2.3.2.27"/>
    </reaction>
</comment>
<comment type="pathway">
    <text>Protein modification; protein ubiquitination.</text>
</comment>
<comment type="subcellular location">
    <subcellularLocation>
        <location evidence="1">Nucleus</location>
        <location evidence="1">Nucleoplasm</location>
    </subcellularLocation>
    <text evidence="1">Localizes to sites of double-strand breaks (DSBs) following DNA damage.</text>
</comment>
<comment type="domain">
    <text evidence="1">The MIU motif (motif interacting with ubiquitin) mediates the interaction with both 'Lys-48'- and 'Lys-63'-linked ubiquitin chains. The UMI motif also mediates interaction with ubiquitin. The specificity for different types of ubiquitin is mediated by juxtaposition of ubiquitin-binding motifs (MIU and UMI motifs) with LR motifs (LRMs) (By similarity).</text>
</comment>
<comment type="similarity">
    <text evidence="4">Belongs to the RNF169 family.</text>
</comment>
<dbReference type="EC" id="2.3.2.27"/>
<dbReference type="EMBL" id="CT027729">
    <property type="status" value="NOT_ANNOTATED_CDS"/>
    <property type="molecule type" value="Genomic_DNA"/>
</dbReference>
<dbReference type="RefSeq" id="NP_001410929.1">
    <property type="nucleotide sequence ID" value="NM_001424000.1"/>
</dbReference>
<dbReference type="RefSeq" id="XP_001336012.2">
    <property type="nucleotide sequence ID" value="XM_001335976.4"/>
</dbReference>
<dbReference type="SMR" id="E7FAP1"/>
<dbReference type="FunCoup" id="E7FAP1">
    <property type="interactions" value="1588"/>
</dbReference>
<dbReference type="STRING" id="7955.ENSDARP00000062855"/>
<dbReference type="PaxDb" id="7955-ENSDARP00000062855"/>
<dbReference type="Ensembl" id="ENSDART00000062856">
    <property type="protein sequence ID" value="ENSDARP00000062855"/>
    <property type="gene ID" value="ENSDARG00000042825"/>
</dbReference>
<dbReference type="GeneID" id="795748"/>
<dbReference type="eggNOG" id="KOG4159">
    <property type="taxonomic scope" value="Eukaryota"/>
</dbReference>
<dbReference type="HOGENOM" id="CLU_034296_0_0_1"/>
<dbReference type="InParanoid" id="E7FAP1"/>
<dbReference type="OMA" id="EFIFRAP"/>
<dbReference type="OrthoDB" id="8959987at2759"/>
<dbReference type="PhylomeDB" id="E7FAP1"/>
<dbReference type="TreeFam" id="TF332796"/>
<dbReference type="UniPathway" id="UPA00143"/>
<dbReference type="PRO" id="PR:E7FAP1"/>
<dbReference type="Proteomes" id="UP000000437">
    <property type="component" value="Chromosome 15"/>
</dbReference>
<dbReference type="Bgee" id="ENSDARG00000042825">
    <property type="expression patterns" value="Expressed in testis and 24 other cell types or tissues"/>
</dbReference>
<dbReference type="GO" id="GO:0005654">
    <property type="term" value="C:nucleoplasm"/>
    <property type="evidence" value="ECO:0000250"/>
    <property type="project" value="UniProtKB"/>
</dbReference>
<dbReference type="GO" id="GO:0005634">
    <property type="term" value="C:nucleus"/>
    <property type="evidence" value="ECO:0000250"/>
    <property type="project" value="UniProtKB"/>
</dbReference>
<dbReference type="GO" id="GO:0035861">
    <property type="term" value="C:site of double-strand break"/>
    <property type="evidence" value="ECO:0000250"/>
    <property type="project" value="UniProtKB"/>
</dbReference>
<dbReference type="GO" id="GO:0070530">
    <property type="term" value="F:K63-linked polyubiquitin modification-dependent protein binding"/>
    <property type="evidence" value="ECO:0000250"/>
    <property type="project" value="UniProtKB"/>
</dbReference>
<dbReference type="GO" id="GO:0031491">
    <property type="term" value="F:nucleosome binding"/>
    <property type="evidence" value="ECO:0000250"/>
    <property type="project" value="UniProtKB"/>
</dbReference>
<dbReference type="GO" id="GO:0004842">
    <property type="term" value="F:ubiquitin-protein transferase activity"/>
    <property type="evidence" value="ECO:0000318"/>
    <property type="project" value="GO_Central"/>
</dbReference>
<dbReference type="GO" id="GO:0008270">
    <property type="term" value="F:zinc ion binding"/>
    <property type="evidence" value="ECO:0007669"/>
    <property type="project" value="UniProtKB-KW"/>
</dbReference>
<dbReference type="GO" id="GO:0006974">
    <property type="term" value="P:DNA damage response"/>
    <property type="evidence" value="ECO:0000250"/>
    <property type="project" value="UniProtKB"/>
</dbReference>
<dbReference type="GO" id="GO:0006302">
    <property type="term" value="P:double-strand break repair"/>
    <property type="evidence" value="ECO:0000318"/>
    <property type="project" value="GO_Central"/>
</dbReference>
<dbReference type="GO" id="GO:2000780">
    <property type="term" value="P:negative regulation of double-strand break repair"/>
    <property type="evidence" value="ECO:0000250"/>
    <property type="project" value="UniProtKB"/>
</dbReference>
<dbReference type="GO" id="GO:0016567">
    <property type="term" value="P:protein ubiquitination"/>
    <property type="evidence" value="ECO:0007669"/>
    <property type="project" value="UniProtKB-UniPathway"/>
</dbReference>
<dbReference type="CDD" id="cd21932">
    <property type="entry name" value="MIU2_RNF168-like"/>
    <property type="match status" value="1"/>
</dbReference>
<dbReference type="CDD" id="cd16550">
    <property type="entry name" value="RING-HC_RNF168"/>
    <property type="match status" value="1"/>
</dbReference>
<dbReference type="Gene3D" id="3.30.40.10">
    <property type="entry name" value="Zinc/RING finger domain, C3HC4 (zinc finger)"/>
    <property type="match status" value="1"/>
</dbReference>
<dbReference type="InterPro" id="IPR051657">
    <property type="entry name" value="RNF168/RNF169_E3_ubiq-ligase"/>
</dbReference>
<dbReference type="InterPro" id="IPR001841">
    <property type="entry name" value="Znf_RING"/>
</dbReference>
<dbReference type="InterPro" id="IPR013083">
    <property type="entry name" value="Znf_RING/FYVE/PHD"/>
</dbReference>
<dbReference type="PANTHER" id="PTHR23328:SF2">
    <property type="entry name" value="E3 UBIQUITIN-PROTEIN LIGASE RNF169"/>
    <property type="match status" value="1"/>
</dbReference>
<dbReference type="PANTHER" id="PTHR23328">
    <property type="entry name" value="RING-TYPE DOMAIN-CONTAINING PROTEIN"/>
    <property type="match status" value="1"/>
</dbReference>
<dbReference type="SMART" id="SM00184">
    <property type="entry name" value="RING"/>
    <property type="match status" value="1"/>
</dbReference>
<dbReference type="SUPFAM" id="SSF57850">
    <property type="entry name" value="RING/U-box"/>
    <property type="match status" value="1"/>
</dbReference>
<dbReference type="PROSITE" id="PS50089">
    <property type="entry name" value="ZF_RING_2"/>
    <property type="match status" value="1"/>
</dbReference>
<accession>E7FAP1</accession>
<organism>
    <name type="scientific">Danio rerio</name>
    <name type="common">Zebrafish</name>
    <name type="synonym">Brachydanio rerio</name>
    <dbReference type="NCBI Taxonomy" id="7955"/>
    <lineage>
        <taxon>Eukaryota</taxon>
        <taxon>Metazoa</taxon>
        <taxon>Chordata</taxon>
        <taxon>Craniata</taxon>
        <taxon>Vertebrata</taxon>
        <taxon>Euteleostomi</taxon>
        <taxon>Actinopterygii</taxon>
        <taxon>Neopterygii</taxon>
        <taxon>Teleostei</taxon>
        <taxon>Ostariophysi</taxon>
        <taxon>Cypriniformes</taxon>
        <taxon>Danionidae</taxon>
        <taxon>Danioninae</taxon>
        <taxon>Danio</taxon>
    </lineage>
</organism>
<feature type="chain" id="PRO_0000418009" description="E3 ubiquitin-protein ligase RNF169">
    <location>
        <begin position="1"/>
        <end position="630"/>
    </location>
</feature>
<feature type="zinc finger region" description="RING-type" evidence="2">
    <location>
        <begin position="36"/>
        <end position="75"/>
    </location>
</feature>
<feature type="region of interest" description="Disordered" evidence="3">
    <location>
        <begin position="1"/>
        <end position="24"/>
    </location>
</feature>
<feature type="region of interest" description="Disordered" evidence="3">
    <location>
        <begin position="220"/>
        <end position="247"/>
    </location>
</feature>
<feature type="short sequence motif" description="UMI motif">
    <location>
        <begin position="155"/>
        <end position="163"/>
    </location>
</feature>
<feature type="short sequence motif" description="MIU motif">
    <location>
        <begin position="565"/>
        <end position="582"/>
    </location>
</feature>
<feature type="short sequence motif" description="LR motif">
    <location>
        <begin position="599"/>
        <end position="611"/>
    </location>
</feature>
<feature type="compositionally biased region" description="Basic and acidic residues" evidence="3">
    <location>
        <begin position="224"/>
        <end position="233"/>
    </location>
</feature>
<keyword id="KW-0227">DNA damage</keyword>
<keyword id="KW-0479">Metal-binding</keyword>
<keyword id="KW-0539">Nucleus</keyword>
<keyword id="KW-1185">Reference proteome</keyword>
<keyword id="KW-0808">Transferase</keyword>
<keyword id="KW-0833">Ubl conjugation pathway</keyword>
<keyword id="KW-0862">Zinc</keyword>
<keyword id="KW-0863">Zinc-finger</keyword>
<proteinExistence type="inferred from homology"/>
<gene>
    <name type="primary">rnf169</name>
</gene>
<evidence type="ECO:0000250" key="1"/>
<evidence type="ECO:0000255" key="2">
    <source>
        <dbReference type="PROSITE-ProRule" id="PRU00175"/>
    </source>
</evidence>
<evidence type="ECO:0000256" key="3">
    <source>
        <dbReference type="SAM" id="MobiDB-lite"/>
    </source>
</evidence>
<evidence type="ECO:0000305" key="4"/>
<reference key="1">
    <citation type="journal article" date="2013" name="Nature">
        <title>The zebrafish reference genome sequence and its relationship to the human genome.</title>
        <authorList>
            <person name="Howe K."/>
            <person name="Clark M.D."/>
            <person name="Torroja C.F."/>
            <person name="Torrance J."/>
            <person name="Berthelot C."/>
            <person name="Muffato M."/>
            <person name="Collins J.E."/>
            <person name="Humphray S."/>
            <person name="McLaren K."/>
            <person name="Matthews L."/>
            <person name="McLaren S."/>
            <person name="Sealy I."/>
            <person name="Caccamo M."/>
            <person name="Churcher C."/>
            <person name="Scott C."/>
            <person name="Barrett J.C."/>
            <person name="Koch R."/>
            <person name="Rauch G.J."/>
            <person name="White S."/>
            <person name="Chow W."/>
            <person name="Kilian B."/>
            <person name="Quintais L.T."/>
            <person name="Guerra-Assuncao J.A."/>
            <person name="Zhou Y."/>
            <person name="Gu Y."/>
            <person name="Yen J."/>
            <person name="Vogel J.H."/>
            <person name="Eyre T."/>
            <person name="Redmond S."/>
            <person name="Banerjee R."/>
            <person name="Chi J."/>
            <person name="Fu B."/>
            <person name="Langley E."/>
            <person name="Maguire S.F."/>
            <person name="Laird G.K."/>
            <person name="Lloyd D."/>
            <person name="Kenyon E."/>
            <person name="Donaldson S."/>
            <person name="Sehra H."/>
            <person name="Almeida-King J."/>
            <person name="Loveland J."/>
            <person name="Trevanion S."/>
            <person name="Jones M."/>
            <person name="Quail M."/>
            <person name="Willey D."/>
            <person name="Hunt A."/>
            <person name="Burton J."/>
            <person name="Sims S."/>
            <person name="McLay K."/>
            <person name="Plumb B."/>
            <person name="Davis J."/>
            <person name="Clee C."/>
            <person name="Oliver K."/>
            <person name="Clark R."/>
            <person name="Riddle C."/>
            <person name="Elliot D."/>
            <person name="Threadgold G."/>
            <person name="Harden G."/>
            <person name="Ware D."/>
            <person name="Begum S."/>
            <person name="Mortimore B."/>
            <person name="Kerry G."/>
            <person name="Heath P."/>
            <person name="Phillimore B."/>
            <person name="Tracey A."/>
            <person name="Corby N."/>
            <person name="Dunn M."/>
            <person name="Johnson C."/>
            <person name="Wood J."/>
            <person name="Clark S."/>
            <person name="Pelan S."/>
            <person name="Griffiths G."/>
            <person name="Smith M."/>
            <person name="Glithero R."/>
            <person name="Howden P."/>
            <person name="Barker N."/>
            <person name="Lloyd C."/>
            <person name="Stevens C."/>
            <person name="Harley J."/>
            <person name="Holt K."/>
            <person name="Panagiotidis G."/>
            <person name="Lovell J."/>
            <person name="Beasley H."/>
            <person name="Henderson C."/>
            <person name="Gordon D."/>
            <person name="Auger K."/>
            <person name="Wright D."/>
            <person name="Collins J."/>
            <person name="Raisen C."/>
            <person name="Dyer L."/>
            <person name="Leung K."/>
            <person name="Robertson L."/>
            <person name="Ambridge K."/>
            <person name="Leongamornlert D."/>
            <person name="McGuire S."/>
            <person name="Gilderthorp R."/>
            <person name="Griffiths C."/>
            <person name="Manthravadi D."/>
            <person name="Nichol S."/>
            <person name="Barker G."/>
            <person name="Whitehead S."/>
            <person name="Kay M."/>
            <person name="Brown J."/>
            <person name="Murnane C."/>
            <person name="Gray E."/>
            <person name="Humphries M."/>
            <person name="Sycamore N."/>
            <person name="Barker D."/>
            <person name="Saunders D."/>
            <person name="Wallis J."/>
            <person name="Babbage A."/>
            <person name="Hammond S."/>
            <person name="Mashreghi-Mohammadi M."/>
            <person name="Barr L."/>
            <person name="Martin S."/>
            <person name="Wray P."/>
            <person name="Ellington A."/>
            <person name="Matthews N."/>
            <person name="Ellwood M."/>
            <person name="Woodmansey R."/>
            <person name="Clark G."/>
            <person name="Cooper J."/>
            <person name="Tromans A."/>
            <person name="Grafham D."/>
            <person name="Skuce C."/>
            <person name="Pandian R."/>
            <person name="Andrews R."/>
            <person name="Harrison E."/>
            <person name="Kimberley A."/>
            <person name="Garnett J."/>
            <person name="Fosker N."/>
            <person name="Hall R."/>
            <person name="Garner P."/>
            <person name="Kelly D."/>
            <person name="Bird C."/>
            <person name="Palmer S."/>
            <person name="Gehring I."/>
            <person name="Berger A."/>
            <person name="Dooley C.M."/>
            <person name="Ersan-Urun Z."/>
            <person name="Eser C."/>
            <person name="Geiger H."/>
            <person name="Geisler M."/>
            <person name="Karotki L."/>
            <person name="Kirn A."/>
            <person name="Konantz J."/>
            <person name="Konantz M."/>
            <person name="Oberlander M."/>
            <person name="Rudolph-Geiger S."/>
            <person name="Teucke M."/>
            <person name="Lanz C."/>
            <person name="Raddatz G."/>
            <person name="Osoegawa K."/>
            <person name="Zhu B."/>
            <person name="Rapp A."/>
            <person name="Widaa S."/>
            <person name="Langford C."/>
            <person name="Yang F."/>
            <person name="Schuster S.C."/>
            <person name="Carter N.P."/>
            <person name="Harrow J."/>
            <person name="Ning Z."/>
            <person name="Herrero J."/>
            <person name="Searle S.M."/>
            <person name="Enright A."/>
            <person name="Geisler R."/>
            <person name="Plasterk R.H."/>
            <person name="Lee C."/>
            <person name="Westerfield M."/>
            <person name="de Jong P.J."/>
            <person name="Zon L.I."/>
            <person name="Postlethwait J.H."/>
            <person name="Nusslein-Volhard C."/>
            <person name="Hubbard T.J."/>
            <person name="Roest Crollius H."/>
            <person name="Rogers J."/>
            <person name="Stemple D.L."/>
        </authorList>
    </citation>
    <scope>NUCLEOTIDE SEQUENCE [LARGE SCALE GENOMIC DNA]</scope>
    <source>
        <strain>Tuebingen</strain>
    </source>
</reference>
<name>RN169_DANRE</name>
<sequence length="630" mass="71358">MKMAAVGSAKSTGPGQRSKSRPGALSAPLSLEEARCPVCSEILLEPVTMPCGHSVCLHCFQRTVKLISLCCPLCRLRVSSWARKQSREKSLVNAELWELVRLSHPERCKRRMEQRDGEIPDGEIFRAPVPVHKVGEMRQEYEKQKMKSGRSEETDERKKKMHIKEECVLLKHCQYPFCGVSDSENEEPVGRRTRHVSAFVRKTRCSPAFNKSCLHSSAAQRSRSCTDSEDGRGKSRGHTNQAVPEKANIAHSYNAGILLSSENSRSFSAPLLSLDKRHHWRGIHTSSATLVLQTKPERSISPESNDSISEELNHFKPIVCSPCTPPKRLPDGRLLEPMIVKSTPRNLTRALHKSTSYEASPTILQKWKQIEVDRQCIKVTSKGTVTSPIAEDLNLKLSPVEERDCQPCSCSVAKDRLLDLQCICGSNAHKSKSRKDKPIIYNKRRLIFDPYNKGEEKTQVAALIKTFGDSSTPKACKELCEPSEMGPPMLDSNAGHCNQGTVDPDHNIKINEPTTMSCVLNRPTSRRGKKRSQKTKHMEETLQTKISRTNRYDSLDDLIVQRMSQEKEDRELALKLQRQFDRECKKVDRHKTSRNKYELRSWGSKDGIVGYNTRRSGRVSKQNEHFNYTC</sequence>
<protein>
    <recommendedName>
        <fullName>E3 ubiquitin-protein ligase RNF169</fullName>
        <ecNumber>2.3.2.27</ecNumber>
    </recommendedName>
    <alternativeName>
        <fullName>RING finger protein 169</fullName>
    </alternativeName>
    <alternativeName>
        <fullName evidence="4">RING-type E3 ubiquitin transferase RNF169</fullName>
    </alternativeName>
</protein>